<accession>Q3YVY3</accession>
<organism>
    <name type="scientific">Shigella sonnei (strain Ss046)</name>
    <dbReference type="NCBI Taxonomy" id="300269"/>
    <lineage>
        <taxon>Bacteria</taxon>
        <taxon>Pseudomonadati</taxon>
        <taxon>Pseudomonadota</taxon>
        <taxon>Gammaproteobacteria</taxon>
        <taxon>Enterobacterales</taxon>
        <taxon>Enterobacteriaceae</taxon>
        <taxon>Shigella</taxon>
    </lineage>
</organism>
<reference key="1">
    <citation type="journal article" date="2005" name="Nucleic Acids Res.">
        <title>Genome dynamics and diversity of Shigella species, the etiologic agents of bacillary dysentery.</title>
        <authorList>
            <person name="Yang F."/>
            <person name="Yang J."/>
            <person name="Zhang X."/>
            <person name="Chen L."/>
            <person name="Jiang Y."/>
            <person name="Yan Y."/>
            <person name="Tang X."/>
            <person name="Wang J."/>
            <person name="Xiong Z."/>
            <person name="Dong J."/>
            <person name="Xue Y."/>
            <person name="Zhu Y."/>
            <person name="Xu X."/>
            <person name="Sun L."/>
            <person name="Chen S."/>
            <person name="Nie H."/>
            <person name="Peng J."/>
            <person name="Xu J."/>
            <person name="Wang Y."/>
            <person name="Yuan Z."/>
            <person name="Wen Y."/>
            <person name="Yao Z."/>
            <person name="Shen Y."/>
            <person name="Qiang B."/>
            <person name="Hou Y."/>
            <person name="Yu J."/>
            <person name="Jin Q."/>
        </authorList>
    </citation>
    <scope>NUCLEOTIDE SEQUENCE [LARGE SCALE GENOMIC DNA]</scope>
    <source>
        <strain>Ss046</strain>
    </source>
</reference>
<keyword id="KW-0007">Acetylation</keyword>
<keyword id="KW-0119">Carbohydrate metabolism</keyword>
<keyword id="KW-0413">Isomerase</keyword>
<keyword id="KW-0521">NADP</keyword>
<keyword id="KW-1185">Reference proteome</keyword>
<feature type="chain" id="PRO_0000255744" description="ADP-L-glycero-D-manno-heptose-6-epimerase">
    <location>
        <begin position="1"/>
        <end position="310"/>
    </location>
</feature>
<feature type="active site" description="Proton acceptor" evidence="1">
    <location>
        <position position="140"/>
    </location>
</feature>
<feature type="active site" description="Proton acceptor" evidence="1">
    <location>
        <position position="178"/>
    </location>
</feature>
<feature type="binding site" evidence="1">
    <location>
        <begin position="10"/>
        <end position="11"/>
    </location>
    <ligand>
        <name>NADP(+)</name>
        <dbReference type="ChEBI" id="CHEBI:58349"/>
    </ligand>
</feature>
<feature type="binding site" evidence="1">
    <location>
        <begin position="31"/>
        <end position="32"/>
    </location>
    <ligand>
        <name>NADP(+)</name>
        <dbReference type="ChEBI" id="CHEBI:58349"/>
    </ligand>
</feature>
<feature type="binding site" evidence="1">
    <location>
        <position position="38"/>
    </location>
    <ligand>
        <name>NADP(+)</name>
        <dbReference type="ChEBI" id="CHEBI:58349"/>
    </ligand>
</feature>
<feature type="binding site" evidence="1">
    <location>
        <position position="53"/>
    </location>
    <ligand>
        <name>NADP(+)</name>
        <dbReference type="ChEBI" id="CHEBI:58349"/>
    </ligand>
</feature>
<feature type="binding site" evidence="1">
    <location>
        <begin position="75"/>
        <end position="79"/>
    </location>
    <ligand>
        <name>NADP(+)</name>
        <dbReference type="ChEBI" id="CHEBI:58349"/>
    </ligand>
</feature>
<feature type="binding site" evidence="1">
    <location>
        <position position="92"/>
    </location>
    <ligand>
        <name>NADP(+)</name>
        <dbReference type="ChEBI" id="CHEBI:58349"/>
    </ligand>
</feature>
<feature type="binding site" evidence="1">
    <location>
        <position position="144"/>
    </location>
    <ligand>
        <name>NADP(+)</name>
        <dbReference type="ChEBI" id="CHEBI:58349"/>
    </ligand>
</feature>
<feature type="binding site" evidence="1">
    <location>
        <position position="169"/>
    </location>
    <ligand>
        <name>substrate</name>
    </ligand>
</feature>
<feature type="binding site" evidence="1">
    <location>
        <position position="170"/>
    </location>
    <ligand>
        <name>NADP(+)</name>
        <dbReference type="ChEBI" id="CHEBI:58349"/>
    </ligand>
</feature>
<feature type="binding site" evidence="1">
    <location>
        <position position="178"/>
    </location>
    <ligand>
        <name>NADP(+)</name>
        <dbReference type="ChEBI" id="CHEBI:58349"/>
    </ligand>
</feature>
<feature type="binding site" evidence="1">
    <location>
        <position position="180"/>
    </location>
    <ligand>
        <name>substrate</name>
    </ligand>
</feature>
<feature type="binding site" evidence="1">
    <location>
        <position position="187"/>
    </location>
    <ligand>
        <name>substrate</name>
    </ligand>
</feature>
<feature type="binding site" evidence="1">
    <location>
        <begin position="201"/>
        <end position="204"/>
    </location>
    <ligand>
        <name>substrate</name>
    </ligand>
</feature>
<feature type="binding site" evidence="1">
    <location>
        <position position="209"/>
    </location>
    <ligand>
        <name>substrate</name>
    </ligand>
</feature>
<feature type="binding site" evidence="1">
    <location>
        <position position="272"/>
    </location>
    <ligand>
        <name>substrate</name>
    </ligand>
</feature>
<feature type="modified residue" description="N6-acetyllysine" evidence="1">
    <location>
        <position position="267"/>
    </location>
</feature>
<evidence type="ECO:0000255" key="1">
    <source>
        <dbReference type="HAMAP-Rule" id="MF_01601"/>
    </source>
</evidence>
<protein>
    <recommendedName>
        <fullName evidence="1">ADP-L-glycero-D-manno-heptose-6-epimerase</fullName>
        <ecNumber evidence="1">5.1.3.20</ecNumber>
    </recommendedName>
    <alternativeName>
        <fullName evidence="1">ADP-L-glycero-beta-D-manno-heptose-6-epimerase</fullName>
        <shortName evidence="1">ADP-glyceromanno-heptose 6-epimerase</shortName>
        <shortName evidence="1">ADP-hep 6-epimerase</shortName>
        <shortName evidence="1">AGME</shortName>
    </alternativeName>
</protein>
<comment type="function">
    <text evidence="1">Catalyzes the interconversion between ADP-D-glycero-beta-D-manno-heptose and ADP-L-glycero-beta-D-manno-heptose via an epimerization at carbon 6 of the heptose.</text>
</comment>
<comment type="catalytic activity">
    <reaction evidence="1">
        <text>ADP-D-glycero-beta-D-manno-heptose = ADP-L-glycero-beta-D-manno-heptose</text>
        <dbReference type="Rhea" id="RHEA:17577"/>
        <dbReference type="ChEBI" id="CHEBI:59967"/>
        <dbReference type="ChEBI" id="CHEBI:61506"/>
        <dbReference type="EC" id="5.1.3.20"/>
    </reaction>
</comment>
<comment type="cofactor">
    <cofactor evidence="1">
        <name>NADP(+)</name>
        <dbReference type="ChEBI" id="CHEBI:58349"/>
    </cofactor>
    <text evidence="1">Binds 1 NADP(+) per subunit.</text>
</comment>
<comment type="pathway">
    <text evidence="1">Nucleotide-sugar biosynthesis; ADP-L-glycero-beta-D-manno-heptose biosynthesis; ADP-L-glycero-beta-D-manno-heptose from D-glycero-beta-D-manno-heptose 7-phosphate: step 4/4.</text>
</comment>
<comment type="subunit">
    <text evidence="1">Homopentamer.</text>
</comment>
<comment type="domain">
    <text evidence="1">Contains a large N-terminal NADP-binding domain, and a smaller C-terminal substrate-binding domain.</text>
</comment>
<comment type="similarity">
    <text evidence="1">Belongs to the NAD(P)-dependent epimerase/dehydratase family. HldD subfamily.</text>
</comment>
<sequence length="310" mass="34894">MIIVTGGAGFIGSNIVKALNDKGITDILVVDNLKDGTKFVNLVDLDIADYMDKEDFLIQIMAGEEFGDVEAIFHEGACSSTTEWDGKYMMDNNYQYSKELLHYCLEREIPFLYASSAATYGGRTSDFIESREYEKPLNVYGYSKFLFDEYVRQILPEANSQIVGFRYFNVYGPREGHKGSMASVAFHLNTQLNNGESPKLFEGSENFKRDFVYVGDVADVNLWFLENGVSGIFNLGTGRAESFQAVADATLAYHKKGQIEYIPFPDKLKGRYQAFTQADLTNLRAAGYDKPFKTVAEGVTEYMAWLNRDA</sequence>
<gene>
    <name evidence="1" type="primary">hldD</name>
    <name type="ordered locus">SSON_3786</name>
</gene>
<proteinExistence type="inferred from homology"/>
<dbReference type="EC" id="5.1.3.20" evidence="1"/>
<dbReference type="EMBL" id="CP000038">
    <property type="protein sequence ID" value="AAZ90329.1"/>
    <property type="molecule type" value="Genomic_DNA"/>
</dbReference>
<dbReference type="SMR" id="Q3YVY3"/>
<dbReference type="KEGG" id="ssn:SSON_3786"/>
<dbReference type="HOGENOM" id="CLU_007383_1_3_6"/>
<dbReference type="UniPathway" id="UPA00356">
    <property type="reaction ID" value="UER00440"/>
</dbReference>
<dbReference type="Proteomes" id="UP000002529">
    <property type="component" value="Chromosome"/>
</dbReference>
<dbReference type="GO" id="GO:0008712">
    <property type="term" value="F:ADP-glyceromanno-heptose 6-epimerase activity"/>
    <property type="evidence" value="ECO:0007669"/>
    <property type="project" value="UniProtKB-UniRule"/>
</dbReference>
<dbReference type="GO" id="GO:0050661">
    <property type="term" value="F:NADP binding"/>
    <property type="evidence" value="ECO:0007669"/>
    <property type="project" value="InterPro"/>
</dbReference>
<dbReference type="GO" id="GO:0097171">
    <property type="term" value="P:ADP-L-glycero-beta-D-manno-heptose biosynthetic process"/>
    <property type="evidence" value="ECO:0007669"/>
    <property type="project" value="UniProtKB-UniPathway"/>
</dbReference>
<dbReference type="GO" id="GO:0005975">
    <property type="term" value="P:carbohydrate metabolic process"/>
    <property type="evidence" value="ECO:0007669"/>
    <property type="project" value="UniProtKB-UniRule"/>
</dbReference>
<dbReference type="CDD" id="cd05248">
    <property type="entry name" value="ADP_GME_SDR_e"/>
    <property type="match status" value="1"/>
</dbReference>
<dbReference type="Gene3D" id="3.40.50.720">
    <property type="entry name" value="NAD(P)-binding Rossmann-like Domain"/>
    <property type="match status" value="1"/>
</dbReference>
<dbReference type="Gene3D" id="3.90.25.10">
    <property type="entry name" value="UDP-galactose 4-epimerase, domain 1"/>
    <property type="match status" value="1"/>
</dbReference>
<dbReference type="HAMAP" id="MF_01601">
    <property type="entry name" value="Heptose_epimerase"/>
    <property type="match status" value="1"/>
</dbReference>
<dbReference type="InterPro" id="IPR001509">
    <property type="entry name" value="Epimerase_deHydtase"/>
</dbReference>
<dbReference type="InterPro" id="IPR011912">
    <property type="entry name" value="Heptose_epim"/>
</dbReference>
<dbReference type="InterPro" id="IPR036291">
    <property type="entry name" value="NAD(P)-bd_dom_sf"/>
</dbReference>
<dbReference type="NCBIfam" id="TIGR02197">
    <property type="entry name" value="heptose_epim"/>
    <property type="match status" value="1"/>
</dbReference>
<dbReference type="NCBIfam" id="NF008360">
    <property type="entry name" value="PRK11150.1"/>
    <property type="match status" value="1"/>
</dbReference>
<dbReference type="PANTHER" id="PTHR43103:SF3">
    <property type="entry name" value="ADP-L-GLYCERO-D-MANNO-HEPTOSE-6-EPIMERASE"/>
    <property type="match status" value="1"/>
</dbReference>
<dbReference type="PANTHER" id="PTHR43103">
    <property type="entry name" value="NUCLEOSIDE-DIPHOSPHATE-SUGAR EPIMERASE"/>
    <property type="match status" value="1"/>
</dbReference>
<dbReference type="Pfam" id="PF01370">
    <property type="entry name" value="Epimerase"/>
    <property type="match status" value="1"/>
</dbReference>
<dbReference type="SUPFAM" id="SSF51735">
    <property type="entry name" value="NAD(P)-binding Rossmann-fold domains"/>
    <property type="match status" value="1"/>
</dbReference>
<name>HLDD_SHISS</name>